<name>POL_IPMA</name>
<accession>P11368</accession>
<dbReference type="EC" id="2.7.7.49"/>
<dbReference type="EC" id="2.7.7.7"/>
<dbReference type="EC" id="3.1.26.4"/>
<dbReference type="PIR" id="B26787">
    <property type="entry name" value="GNMSIA"/>
</dbReference>
<dbReference type="SMR" id="P11368"/>
<dbReference type="GO" id="GO:0003677">
    <property type="term" value="F:DNA binding"/>
    <property type="evidence" value="ECO:0007669"/>
    <property type="project" value="UniProtKB-KW"/>
</dbReference>
<dbReference type="GO" id="GO:0003887">
    <property type="term" value="F:DNA-directed DNA polymerase activity"/>
    <property type="evidence" value="ECO:0007669"/>
    <property type="project" value="UniProtKB-EC"/>
</dbReference>
<dbReference type="GO" id="GO:0035613">
    <property type="term" value="F:RNA stem-loop binding"/>
    <property type="evidence" value="ECO:0007669"/>
    <property type="project" value="TreeGrafter"/>
</dbReference>
<dbReference type="GO" id="GO:0003964">
    <property type="term" value="F:RNA-directed DNA polymerase activity"/>
    <property type="evidence" value="ECO:0007669"/>
    <property type="project" value="UniProtKB-KW"/>
</dbReference>
<dbReference type="GO" id="GO:0004523">
    <property type="term" value="F:RNA-DNA hybrid ribonuclease activity"/>
    <property type="evidence" value="ECO:0007669"/>
    <property type="project" value="UniProtKB-EC"/>
</dbReference>
<dbReference type="GO" id="GO:0008270">
    <property type="term" value="F:zinc ion binding"/>
    <property type="evidence" value="ECO:0007669"/>
    <property type="project" value="InterPro"/>
</dbReference>
<dbReference type="GO" id="GO:0015074">
    <property type="term" value="P:DNA integration"/>
    <property type="evidence" value="ECO:0007669"/>
    <property type="project" value="UniProtKB-KW"/>
</dbReference>
<dbReference type="GO" id="GO:0006310">
    <property type="term" value="P:DNA recombination"/>
    <property type="evidence" value="ECO:0007669"/>
    <property type="project" value="UniProtKB-KW"/>
</dbReference>
<dbReference type="GO" id="GO:0075713">
    <property type="term" value="P:establishment of integrated proviral latency"/>
    <property type="evidence" value="ECO:0007669"/>
    <property type="project" value="UniProtKB-KW"/>
</dbReference>
<dbReference type="GO" id="GO:0046718">
    <property type="term" value="P:symbiont entry into host cell"/>
    <property type="evidence" value="ECO:0007669"/>
    <property type="project" value="UniProtKB-KW"/>
</dbReference>
<dbReference type="GO" id="GO:0044826">
    <property type="term" value="P:viral genome integration into host DNA"/>
    <property type="evidence" value="ECO:0007669"/>
    <property type="project" value="UniProtKB-KW"/>
</dbReference>
<dbReference type="CDD" id="cd01645">
    <property type="entry name" value="RT_Rtv"/>
    <property type="match status" value="1"/>
</dbReference>
<dbReference type="Gene3D" id="1.10.10.200">
    <property type="match status" value="1"/>
</dbReference>
<dbReference type="Gene3D" id="3.30.70.270">
    <property type="match status" value="2"/>
</dbReference>
<dbReference type="Gene3D" id="3.10.10.10">
    <property type="entry name" value="HIV Type 1 Reverse Transcriptase, subunit A, domain 1"/>
    <property type="match status" value="1"/>
</dbReference>
<dbReference type="Gene3D" id="2.30.30.10">
    <property type="entry name" value="Integrase, C-terminal domain superfamily, retroviral"/>
    <property type="match status" value="1"/>
</dbReference>
<dbReference type="Gene3D" id="3.30.420.10">
    <property type="entry name" value="Ribonuclease H-like superfamily/Ribonuclease H"/>
    <property type="match status" value="2"/>
</dbReference>
<dbReference type="InterPro" id="IPR043502">
    <property type="entry name" value="DNA/RNA_pol_sf"/>
</dbReference>
<dbReference type="InterPro" id="IPR017856">
    <property type="entry name" value="Integrase-like_N"/>
</dbReference>
<dbReference type="InterPro" id="IPR036862">
    <property type="entry name" value="Integrase_C_dom_sf_retrovir"/>
</dbReference>
<dbReference type="InterPro" id="IPR001037">
    <property type="entry name" value="Integrase_C_retrovir"/>
</dbReference>
<dbReference type="InterPro" id="IPR001584">
    <property type="entry name" value="Integrase_cat-core"/>
</dbReference>
<dbReference type="InterPro" id="IPR003308">
    <property type="entry name" value="Integrase_Zn-bd_dom_N"/>
</dbReference>
<dbReference type="InterPro" id="IPR043128">
    <property type="entry name" value="Rev_trsase/Diguanyl_cyclase"/>
</dbReference>
<dbReference type="InterPro" id="IPR012337">
    <property type="entry name" value="RNaseH-like_sf"/>
</dbReference>
<dbReference type="InterPro" id="IPR002156">
    <property type="entry name" value="RNaseH_domain"/>
</dbReference>
<dbReference type="InterPro" id="IPR036397">
    <property type="entry name" value="RNaseH_sf"/>
</dbReference>
<dbReference type="InterPro" id="IPR000477">
    <property type="entry name" value="RT_dom"/>
</dbReference>
<dbReference type="InterPro" id="IPR010661">
    <property type="entry name" value="RVT_thumb"/>
</dbReference>
<dbReference type="PANTHER" id="PTHR41694">
    <property type="entry name" value="ENDOGENOUS RETROVIRUS GROUP K MEMBER POL PROTEIN"/>
    <property type="match status" value="1"/>
</dbReference>
<dbReference type="PANTHER" id="PTHR41694:SF3">
    <property type="entry name" value="RNA-DIRECTED DNA POLYMERASE-RELATED"/>
    <property type="match status" value="1"/>
</dbReference>
<dbReference type="Pfam" id="PF00552">
    <property type="entry name" value="IN_DBD_C"/>
    <property type="match status" value="1"/>
</dbReference>
<dbReference type="Pfam" id="PF02022">
    <property type="entry name" value="Integrase_Zn"/>
    <property type="match status" value="1"/>
</dbReference>
<dbReference type="Pfam" id="PF00075">
    <property type="entry name" value="RNase_H"/>
    <property type="match status" value="1"/>
</dbReference>
<dbReference type="Pfam" id="PF00665">
    <property type="entry name" value="rve"/>
    <property type="match status" value="1"/>
</dbReference>
<dbReference type="Pfam" id="PF00078">
    <property type="entry name" value="RVT_1"/>
    <property type="match status" value="1"/>
</dbReference>
<dbReference type="Pfam" id="PF06817">
    <property type="entry name" value="RVT_thumb"/>
    <property type="match status" value="1"/>
</dbReference>
<dbReference type="SUPFAM" id="SSF50122">
    <property type="entry name" value="DNA-binding domain of retroviral integrase"/>
    <property type="match status" value="1"/>
</dbReference>
<dbReference type="SUPFAM" id="SSF56672">
    <property type="entry name" value="DNA/RNA polymerases"/>
    <property type="match status" value="1"/>
</dbReference>
<dbReference type="SUPFAM" id="SSF46919">
    <property type="entry name" value="N-terminal Zn binding domain of HIV integrase"/>
    <property type="match status" value="1"/>
</dbReference>
<dbReference type="SUPFAM" id="SSF53098">
    <property type="entry name" value="Ribonuclease H-like"/>
    <property type="match status" value="2"/>
</dbReference>
<dbReference type="PROSITE" id="PS50994">
    <property type="entry name" value="INTEGRASE"/>
    <property type="match status" value="1"/>
</dbReference>
<dbReference type="PROSITE" id="PS51027">
    <property type="entry name" value="INTEGRASE_DBD"/>
    <property type="match status" value="1"/>
</dbReference>
<dbReference type="PROSITE" id="PS50879">
    <property type="entry name" value="RNASE_H_1"/>
    <property type="match status" value="1"/>
</dbReference>
<dbReference type="PROSITE" id="PS50878">
    <property type="entry name" value="RT_POL"/>
    <property type="match status" value="1"/>
</dbReference>
<proteinExistence type="inferred from homology"/>
<protein>
    <recommendedName>
        <fullName>Intracisternal A-particle Pol-related polyprotein</fullName>
    </recommendedName>
    <component>
        <recommendedName>
            <fullName>Reverse transcriptase/ribonuclease H</fullName>
            <shortName>RT</shortName>
            <ecNumber>2.7.7.49</ecNumber>
            <ecNumber>2.7.7.7</ecNumber>
            <ecNumber>3.1.26.4</ecNumber>
        </recommendedName>
    </component>
    <component>
        <recommendedName>
            <fullName>Integrase</fullName>
            <shortName>IN</shortName>
        </recommendedName>
    </component>
</protein>
<keyword id="KW-0229">DNA integration</keyword>
<keyword id="KW-0233">DNA recombination</keyword>
<keyword id="KW-0238">DNA-binding</keyword>
<keyword id="KW-0255">Endonuclease</keyword>
<keyword id="KW-0378">Hydrolase</keyword>
<keyword id="KW-0460">Magnesium</keyword>
<keyword id="KW-0479">Metal-binding</keyword>
<keyword id="KW-0511">Multifunctional enzyme</keyword>
<keyword id="KW-0540">Nuclease</keyword>
<keyword id="KW-0548">Nucleotidyltransferase</keyword>
<keyword id="KW-0695">RNA-directed DNA polymerase</keyword>
<keyword id="KW-0808">Transferase</keyword>
<keyword id="KW-0814">Transposable element</keyword>
<keyword id="KW-1179">Viral genome integration</keyword>
<keyword id="KW-1160">Virus entry into host cell</keyword>
<evidence type="ECO:0000250" key="1">
    <source>
        <dbReference type="UniProtKB" id="P03365"/>
    </source>
</evidence>
<evidence type="ECO:0000255" key="2">
    <source>
        <dbReference type="PROSITE-ProRule" id="PRU00405"/>
    </source>
</evidence>
<evidence type="ECO:0000255" key="3">
    <source>
        <dbReference type="PROSITE-ProRule" id="PRU00408"/>
    </source>
</evidence>
<evidence type="ECO:0000255" key="4">
    <source>
        <dbReference type="PROSITE-ProRule" id="PRU00457"/>
    </source>
</evidence>
<evidence type="ECO:0000255" key="5">
    <source>
        <dbReference type="PROSITE-ProRule" id="PRU00506"/>
    </source>
</evidence>
<evidence type="ECO:0000256" key="6">
    <source>
        <dbReference type="SAM" id="MobiDB-lite"/>
    </source>
</evidence>
<evidence type="ECO:0000305" key="7"/>
<sequence length="867" mass="97779">WKPRQTGSGFSLAAIGAARPIPWKTGDPVWVPQWHLSSEKLEAVIQLVEEQLKLGHIDPSTSPWNTPIFVIKKKSGKWRLLHDLRPINEQMNLFGPVQRGLPVLSALPRGWNLIIIDIKDCFFSIPLCPRDRPRFAFTIPSINSDEPDNRYQWKVLPQGMSNSPTMCQLYVQEALLPVREQFPSLILLLYMDDILLCHKELTMLQKAYPFLLKTLSQWGLQIATEKVQISDTGQFLGSVVSPDKIVPQKVEIRRDHLHTLNNFQKLLGDINWLRPFLKIPSAELRPLFWYLEGDPHISSPRTLTLAANQALQKVEKALQNAQLQAIEDSQPFSLCVFKTAQLPTAVLWQNGPLLWIHPNVSPAKIIDWYPDAIAQLALKGLKAAITHFGRSPYLLIVPYTAAQVQTLAATSNDWAVLVTSFSGKIDNHYPKHPILQFAQNQSVVFPQITVRNPLKNGIVVYTDGSKTGIGAYVANGKVVSKQYNENSPRMVECLVVLEVLKTFLEPLNIVSDSCYVVNAVNLLEGGWSDKPSSRVANIFQQIQLVLLSRSPVYITHVRAHSGLPTSAPWLSGNDLADKATSGGCSLSSPVEAAQEIFITTFHVTAEHYRSRNSLTRKEARDIVTQCQSCCEFLPVPHVGINPRGIRPLQVWQMDVTHVSSFGKLQYLHVSIDTCSGIMFASPLTGEKASHVIQHCLEAWSAWGKPRLLKTDNGPAYTSQKFQQFCRQMDVTHLTGLPYNPQGQGIVERAHRTLKTYLIKQKRELEEILPQHQESLSMALFTLNFLNIDVHGHTAAERQCSEPDRPNEMVKWKNVLHNKWYGPDPILIRSRGAVCVFHRMKTTHFGYQKDSPEKSRLTKGIPDVPRLW</sequence>
<comment type="catalytic activity">
    <reaction evidence="2">
        <text>DNA(n) + a 2'-deoxyribonucleoside 5'-triphosphate = DNA(n+1) + diphosphate</text>
        <dbReference type="Rhea" id="RHEA:22508"/>
        <dbReference type="Rhea" id="RHEA-COMP:17339"/>
        <dbReference type="Rhea" id="RHEA-COMP:17340"/>
        <dbReference type="ChEBI" id="CHEBI:33019"/>
        <dbReference type="ChEBI" id="CHEBI:61560"/>
        <dbReference type="ChEBI" id="CHEBI:173112"/>
        <dbReference type="EC" id="2.7.7.49"/>
    </reaction>
</comment>
<comment type="catalytic activity">
    <reaction evidence="2">
        <text>DNA(n) + a 2'-deoxyribonucleoside 5'-triphosphate = DNA(n+1) + diphosphate</text>
        <dbReference type="Rhea" id="RHEA:22508"/>
        <dbReference type="Rhea" id="RHEA-COMP:17339"/>
        <dbReference type="Rhea" id="RHEA-COMP:17340"/>
        <dbReference type="ChEBI" id="CHEBI:33019"/>
        <dbReference type="ChEBI" id="CHEBI:61560"/>
        <dbReference type="ChEBI" id="CHEBI:173112"/>
        <dbReference type="EC" id="2.7.7.7"/>
    </reaction>
</comment>
<comment type="catalytic activity">
    <reaction evidence="3">
        <text>Endonucleolytic cleavage to 5'-phosphomonoester.</text>
        <dbReference type="EC" id="3.1.26.4"/>
    </reaction>
</comment>
<comment type="cofactor">
    <cofactor evidence="2">
        <name>Mg(2+)</name>
        <dbReference type="ChEBI" id="CHEBI:18420"/>
    </cofactor>
    <text evidence="2">The RT polymerase active site binds 2 magnesium ions.</text>
</comment>
<comment type="miscellaneous">
    <molecule>Intracisternal A-particle Pol-related polyprotein</molecule>
    <text evidence="7">Intracisternal A particles (IAPs) are defective retroviral elements. Due to extensive mutations in the envelope coding sequence, IAPs can only form defective viral particles confined to the intracisternae of the Golgi. IAPs are an important class of transposable elements that induce genomic mutations and cell transformation by disrupting gene expression.</text>
</comment>
<comment type="miscellaneous">
    <text evidence="2">Reverse transcriptase/ribonuclease HThe reverse transcriptase is an error-prone enzyme that lacks a proof-reading function. High mutations rate is a direct consequence of this characteristic. RT also displays frequent template switching leading to high recombination rate. Recombination mostly occurs between homologous regions of the two copackaged RNA genomes. If these two RNA molecules derive from different viral strains, reverse transcription will give rise to highly recombinated proviral DNAs.</text>
</comment>
<reference key="1">
    <citation type="journal article" date="1987" name="J. Virol.">
        <title>Nucleotide sequence of a complete mouse intracisternal A-particle genome: relationship to known aspects of particle assembly and function.</title>
        <authorList>
            <person name="Mietz J.A."/>
            <person name="Grossman Z."/>
            <person name="Lueders K.K."/>
            <person name="Kuff E.L."/>
        </authorList>
    </citation>
    <scope>NUCLEOTIDE SEQUENCE</scope>
</reference>
<organismHost>
    <name type="scientific">Mus musculus</name>
    <name type="common">Mouse</name>
    <dbReference type="NCBI Taxonomy" id="10090"/>
</organismHost>
<feature type="chain" id="PRO_0000125487" description="Intracisternal A-particle Pol-related polyprotein">
    <location>
        <begin position="1" status="less than"/>
        <end position="867"/>
    </location>
</feature>
<feature type="chain" id="PRO_0000443271" description="Reverse transcriptase/ribonuclease H">
    <location>
        <begin position="1" status="less than"/>
        <end position="592"/>
    </location>
</feature>
<feature type="chain" id="PRO_0000443272" description="Integrase">
    <location>
        <begin position="593"/>
        <end position="867"/>
    </location>
</feature>
<feature type="domain" description="Reverse transcriptase" evidence="2">
    <location>
        <begin position="52"/>
        <end position="240"/>
    </location>
</feature>
<feature type="domain" description="RNase H type-1" evidence="3">
    <location>
        <begin position="454"/>
        <end position="585"/>
    </location>
</feature>
<feature type="domain" description="Integrase catalytic" evidence="4">
    <location>
        <begin position="643"/>
        <end position="802"/>
    </location>
</feature>
<feature type="DNA-binding region" description="Integrase-type" evidence="5">
    <location>
        <begin position="807"/>
        <end position="862"/>
    </location>
</feature>
<feature type="region of interest" description="Disordered" evidence="6">
    <location>
        <begin position="847"/>
        <end position="867"/>
    </location>
</feature>
<feature type="binding site" evidence="2">
    <location>
        <position position="117"/>
    </location>
    <ligand>
        <name>Mg(2+)</name>
        <dbReference type="ChEBI" id="CHEBI:18420"/>
        <label>1</label>
        <note>catalytic</note>
    </ligand>
</feature>
<feature type="binding site" evidence="2">
    <location>
        <position position="192"/>
    </location>
    <ligand>
        <name>Mg(2+)</name>
        <dbReference type="ChEBI" id="CHEBI:18420"/>
        <label>1</label>
        <note>catalytic</note>
    </ligand>
</feature>
<feature type="binding site" evidence="2">
    <location>
        <position position="193"/>
    </location>
    <ligand>
        <name>Mg(2+)</name>
        <dbReference type="ChEBI" id="CHEBI:18420"/>
        <label>1</label>
        <note>catalytic</note>
    </ligand>
</feature>
<feature type="binding site" evidence="3">
    <location>
        <position position="463"/>
    </location>
    <ligand>
        <name>Mg(2+)</name>
        <dbReference type="ChEBI" id="CHEBI:18420"/>
        <label>2</label>
    </ligand>
</feature>
<feature type="binding site" evidence="3">
    <location>
        <position position="492"/>
    </location>
    <ligand>
        <name>Mg(2+)</name>
        <dbReference type="ChEBI" id="CHEBI:18420"/>
        <label>2</label>
    </ligand>
</feature>
<feature type="binding site" evidence="3">
    <location>
        <position position="512"/>
    </location>
    <ligand>
        <name>Mg(2+)</name>
        <dbReference type="ChEBI" id="CHEBI:18420"/>
        <label>2</label>
    </ligand>
</feature>
<feature type="binding site" evidence="3">
    <location>
        <position position="577"/>
    </location>
    <ligand>
        <name>Mg(2+)</name>
        <dbReference type="ChEBI" id="CHEBI:18420"/>
        <label>2</label>
    </ligand>
</feature>
<feature type="binding site" evidence="4">
    <location>
        <position position="654"/>
    </location>
    <ligand>
        <name>Mg(2+)</name>
        <dbReference type="ChEBI" id="CHEBI:18420"/>
        <label>3</label>
        <note>catalytic</note>
    </ligand>
</feature>
<feature type="binding site" evidence="4">
    <location>
        <position position="711"/>
    </location>
    <ligand>
        <name>Mg(2+)</name>
        <dbReference type="ChEBI" id="CHEBI:18420"/>
        <label>3</label>
        <note>catalytic</note>
    </ligand>
</feature>
<feature type="site" description="Cleavage; by viral protease" evidence="1">
    <location>
        <begin position="592"/>
        <end position="593"/>
    </location>
</feature>
<feature type="non-terminal residue">
    <location>
        <position position="1"/>
    </location>
</feature>
<gene>
    <name type="primary">pol</name>
</gene>
<organism>
    <name type="scientific">Mouse intracisternal a-particle MIA14</name>
    <name type="common">IAP-MIA14</name>
    <dbReference type="NCBI Taxonomy" id="11753"/>
    <lineage>
        <taxon>Viruses</taxon>
        <taxon>Riboviria</taxon>
        <taxon>Pararnavirae</taxon>
        <taxon>Artverviricota</taxon>
        <taxon>Revtraviricetes</taxon>
        <taxon>Ortervirales</taxon>
        <taxon>Retroviridae</taxon>
        <taxon>Intracisternal A-particles</taxon>
        <taxon>Mouse intracisternal a-particle MIAE</taxon>
    </lineage>
</organism>